<organism>
    <name type="scientific">Brachypodium distachyon</name>
    <name type="common">Purple false brome</name>
    <name type="synonym">Trachynia distachya</name>
    <dbReference type="NCBI Taxonomy" id="15368"/>
    <lineage>
        <taxon>Eukaryota</taxon>
        <taxon>Viridiplantae</taxon>
        <taxon>Streptophyta</taxon>
        <taxon>Embryophyta</taxon>
        <taxon>Tracheophyta</taxon>
        <taxon>Spermatophyta</taxon>
        <taxon>Magnoliopsida</taxon>
        <taxon>Liliopsida</taxon>
        <taxon>Poales</taxon>
        <taxon>Poaceae</taxon>
        <taxon>BOP clade</taxon>
        <taxon>Pooideae</taxon>
        <taxon>Stipodae</taxon>
        <taxon>Brachypodieae</taxon>
        <taxon>Brachypodium</taxon>
    </lineage>
</organism>
<protein>
    <recommendedName>
        <fullName>CASP-like protein 5A1</fullName>
        <shortName>BdCASPL5A1</shortName>
    </recommendedName>
</protein>
<accession>P0DI68</accession>
<evidence type="ECO:0000250" key="1"/>
<evidence type="ECO:0000255" key="2"/>
<evidence type="ECO:0000256" key="3">
    <source>
        <dbReference type="SAM" id="MobiDB-lite"/>
    </source>
</evidence>
<evidence type="ECO:0000305" key="4"/>
<reference key="1">
    <citation type="journal article" date="2006" name="Theor. Appl. Genet.">
        <title>EST sequencing and phylogenetic analysis of the model grass Brachypodium distachyon.</title>
        <authorList>
            <person name="Vogel J.P."/>
            <person name="Gu Y.Q."/>
            <person name="Twigg P."/>
            <person name="Lazo G.R."/>
            <person name="Laudencia-Chingcuanco D."/>
            <person name="Hayden D.M."/>
            <person name="Donze T.J."/>
            <person name="Vivian L.A."/>
            <person name="Stamova B."/>
            <person name="Coleman-Derr D."/>
        </authorList>
    </citation>
    <scope>NUCLEOTIDE SEQUENCE [LARGE SCALE MRNA]</scope>
    <source>
        <strain>cv. Bd21</strain>
        <tissue>Spike</tissue>
    </source>
</reference>
<reference key="2">
    <citation type="journal article" date="2014" name="Plant Physiol.">
        <title>Functional and evolutionary analysis of the CASPARIAN STRIP MEMBRANE DOMAIN PROTEIN family.</title>
        <authorList>
            <person name="Roppolo D."/>
            <person name="Boeckmann B."/>
            <person name="Pfister A."/>
            <person name="Boutet E."/>
            <person name="Rubio M.C."/>
            <person name="Denervaud-Tendon V."/>
            <person name="Vermeer J.E."/>
            <person name="Gheyselinck J."/>
            <person name="Xenarios I."/>
            <person name="Geldner N."/>
        </authorList>
    </citation>
    <scope>GENE FAMILY</scope>
    <scope>NOMENCLATURE</scope>
</reference>
<dbReference type="EMBL" id="DV476826">
    <property type="status" value="NOT_ANNOTATED_CDS"/>
    <property type="molecule type" value="mRNA"/>
</dbReference>
<dbReference type="FunCoup" id="P0DI68">
    <property type="interactions" value="1955"/>
</dbReference>
<dbReference type="STRING" id="15368.P0DI68"/>
<dbReference type="eggNOG" id="ENOG502QTTS">
    <property type="taxonomic scope" value="Eukaryota"/>
</dbReference>
<dbReference type="InParanoid" id="P0DI68"/>
<dbReference type="Proteomes" id="UP000008810">
    <property type="component" value="Unplaced"/>
</dbReference>
<dbReference type="ExpressionAtlas" id="P0DI68">
    <property type="expression patterns" value="baseline"/>
</dbReference>
<dbReference type="GO" id="GO:0016020">
    <property type="term" value="C:membrane"/>
    <property type="evidence" value="ECO:0000318"/>
    <property type="project" value="GO_Central"/>
</dbReference>
<dbReference type="GO" id="GO:0005886">
    <property type="term" value="C:plasma membrane"/>
    <property type="evidence" value="ECO:0007669"/>
    <property type="project" value="UniProtKB-SubCell"/>
</dbReference>
<dbReference type="InterPro" id="IPR006702">
    <property type="entry name" value="CASP_dom"/>
</dbReference>
<dbReference type="InterPro" id="IPR045009">
    <property type="entry name" value="CASPL-5"/>
</dbReference>
<dbReference type="PANTHER" id="PTHR32021:SF1">
    <property type="entry name" value="CASP-LIKE PROTEIN 5A1"/>
    <property type="match status" value="1"/>
</dbReference>
<dbReference type="PANTHER" id="PTHR32021">
    <property type="entry name" value="CASP-LIKE PROTEIN 5B3"/>
    <property type="match status" value="1"/>
</dbReference>
<dbReference type="Pfam" id="PF04535">
    <property type="entry name" value="CASP_dom"/>
    <property type="match status" value="1"/>
</dbReference>
<name>CSPL1_BRADI</name>
<comment type="subunit">
    <text evidence="1">Homodimer and heterodimers.</text>
</comment>
<comment type="subcellular location">
    <subcellularLocation>
        <location evidence="1">Cell membrane</location>
        <topology evidence="1">Multi-pass membrane protein</topology>
    </subcellularLocation>
</comment>
<comment type="similarity">
    <text evidence="4">Belongs to the Casparian strip membrane proteins (CASP) family.</text>
</comment>
<sequence>MFASRPAVHPVEAPPPTDPVEQPTGVLMKDLPGMPGTAGGLGLRVAQFVFAGVALAVMASTSDFPSVTAFCYLVAATIMQCLWSFSLAIVDIYALLVKRCLRNRRAVCLFAIGDGITAALTFGAACSSAGITVLIDNDLNICAENHCGSFKTATALAFMSWFALTPSFLLNFWSMAAR</sequence>
<feature type="chain" id="PRO_0000418706" description="CASP-like protein 5A1">
    <location>
        <begin position="1"/>
        <end position="178"/>
    </location>
</feature>
<feature type="topological domain" description="Cytoplasmic" evidence="2">
    <location>
        <begin position="1"/>
        <end position="37"/>
    </location>
</feature>
<feature type="transmembrane region" description="Helical" evidence="2">
    <location>
        <begin position="38"/>
        <end position="58"/>
    </location>
</feature>
<feature type="topological domain" description="Extracellular" evidence="2">
    <location>
        <begin position="59"/>
        <end position="69"/>
    </location>
</feature>
<feature type="transmembrane region" description="Helical" evidence="2">
    <location>
        <begin position="70"/>
        <end position="90"/>
    </location>
</feature>
<feature type="topological domain" description="Cytoplasmic" evidence="2">
    <location>
        <begin position="91"/>
        <end position="105"/>
    </location>
</feature>
<feature type="transmembrane region" description="Helical" evidence="2">
    <location>
        <begin position="106"/>
        <end position="126"/>
    </location>
</feature>
<feature type="topological domain" description="Extracellular" evidence="2">
    <location>
        <begin position="127"/>
        <end position="152"/>
    </location>
</feature>
<feature type="transmembrane region" description="Helical" evidence="2">
    <location>
        <begin position="153"/>
        <end position="173"/>
    </location>
</feature>
<feature type="topological domain" description="Cytoplasmic" evidence="2">
    <location>
        <begin position="174"/>
        <end position="178"/>
    </location>
</feature>
<feature type="region of interest" description="Disordered" evidence="3">
    <location>
        <begin position="1"/>
        <end position="24"/>
    </location>
</feature>
<proteinExistence type="evidence at transcript level"/>
<keyword id="KW-1003">Cell membrane</keyword>
<keyword id="KW-0472">Membrane</keyword>
<keyword id="KW-1185">Reference proteome</keyword>
<keyword id="KW-0812">Transmembrane</keyword>
<keyword id="KW-1133">Transmembrane helix</keyword>